<comment type="function">
    <text evidence="1">Catalyzes the conversion of D-ribulose 5-phosphate to formate and 3,4-dihydroxy-2-butanone 4-phosphate.</text>
</comment>
<comment type="function">
    <text evidence="1">Catalyzes the conversion of GTP to 2,5-diamino-6-ribosylamino-4(3H)-pyrimidinone 5'-phosphate (DARP), formate and pyrophosphate.</text>
</comment>
<comment type="catalytic activity">
    <reaction evidence="1">
        <text>D-ribulose 5-phosphate = (2S)-2-hydroxy-3-oxobutyl phosphate + formate + H(+)</text>
        <dbReference type="Rhea" id="RHEA:18457"/>
        <dbReference type="ChEBI" id="CHEBI:15378"/>
        <dbReference type="ChEBI" id="CHEBI:15740"/>
        <dbReference type="ChEBI" id="CHEBI:58121"/>
        <dbReference type="ChEBI" id="CHEBI:58830"/>
        <dbReference type="EC" id="4.1.99.12"/>
    </reaction>
</comment>
<comment type="catalytic activity">
    <reaction evidence="1">
        <text>GTP + 4 H2O = 2,5-diamino-6-hydroxy-4-(5-phosphoribosylamino)-pyrimidine + formate + 2 phosphate + 3 H(+)</text>
        <dbReference type="Rhea" id="RHEA:23704"/>
        <dbReference type="ChEBI" id="CHEBI:15377"/>
        <dbReference type="ChEBI" id="CHEBI:15378"/>
        <dbReference type="ChEBI" id="CHEBI:15740"/>
        <dbReference type="ChEBI" id="CHEBI:37565"/>
        <dbReference type="ChEBI" id="CHEBI:43474"/>
        <dbReference type="ChEBI" id="CHEBI:58614"/>
        <dbReference type="EC" id="3.5.4.25"/>
    </reaction>
</comment>
<comment type="cofactor">
    <cofactor evidence="1">
        <name>Mg(2+)</name>
        <dbReference type="ChEBI" id="CHEBI:18420"/>
    </cofactor>
    <cofactor evidence="1">
        <name>Mn(2+)</name>
        <dbReference type="ChEBI" id="CHEBI:29035"/>
    </cofactor>
    <text evidence="1">Binds 2 divalent metal cations per subunit. Magnesium or manganese.</text>
</comment>
<comment type="cofactor">
    <cofactor evidence="1">
        <name>Zn(2+)</name>
        <dbReference type="ChEBI" id="CHEBI:29105"/>
    </cofactor>
    <text evidence="1">Binds 1 zinc ion per subunit.</text>
</comment>
<comment type="pathway">
    <text evidence="1">Cofactor biosynthesis; riboflavin biosynthesis; 2-hydroxy-3-oxobutyl phosphate from D-ribulose 5-phosphate: step 1/1.</text>
</comment>
<comment type="pathway">
    <text evidence="1">Cofactor biosynthesis; riboflavin biosynthesis; 5-amino-6-(D-ribitylamino)uracil from GTP: step 1/4.</text>
</comment>
<comment type="similarity">
    <text evidence="1">In the N-terminal section; belongs to the DHBP synthase family.</text>
</comment>
<comment type="similarity">
    <text evidence="1">In the C-terminal section; belongs to the GTP cyclohydrolase II family.</text>
</comment>
<feature type="chain" id="PRO_1000067414" description="Riboflavin biosynthesis protein RibBA">
    <location>
        <begin position="1"/>
        <end position="397"/>
    </location>
</feature>
<feature type="region of interest" description="DHBP synthase">
    <location>
        <begin position="1"/>
        <end position="199"/>
    </location>
</feature>
<feature type="region of interest" description="GTP cyclohydrolase II">
    <location>
        <begin position="200"/>
        <end position="397"/>
    </location>
</feature>
<feature type="active site" description="Proton acceptor; for GTP cyclohydrolase activity" evidence="1">
    <location>
        <position position="327"/>
    </location>
</feature>
<feature type="active site" description="Nucleophile; for GTP cyclohydrolase activity" evidence="1">
    <location>
        <position position="329"/>
    </location>
</feature>
<feature type="binding site" evidence="1">
    <location>
        <begin position="26"/>
        <end position="27"/>
    </location>
    <ligand>
        <name>D-ribulose 5-phosphate</name>
        <dbReference type="ChEBI" id="CHEBI:58121"/>
    </ligand>
</feature>
<feature type="binding site" evidence="1">
    <location>
        <position position="27"/>
    </location>
    <ligand>
        <name>Mg(2+)</name>
        <dbReference type="ChEBI" id="CHEBI:18420"/>
        <label>1</label>
    </ligand>
</feature>
<feature type="binding site" evidence="1">
    <location>
        <position position="27"/>
    </location>
    <ligand>
        <name>Mg(2+)</name>
        <dbReference type="ChEBI" id="CHEBI:18420"/>
        <label>2</label>
    </ligand>
</feature>
<feature type="binding site" evidence="1">
    <location>
        <position position="31"/>
    </location>
    <ligand>
        <name>D-ribulose 5-phosphate</name>
        <dbReference type="ChEBI" id="CHEBI:58121"/>
    </ligand>
</feature>
<feature type="binding site" evidence="1">
    <location>
        <begin position="138"/>
        <end position="142"/>
    </location>
    <ligand>
        <name>D-ribulose 5-phosphate</name>
        <dbReference type="ChEBI" id="CHEBI:58121"/>
    </ligand>
</feature>
<feature type="binding site" evidence="1">
    <location>
        <position position="141"/>
    </location>
    <ligand>
        <name>Mg(2+)</name>
        <dbReference type="ChEBI" id="CHEBI:18420"/>
        <label>2</label>
    </ligand>
</feature>
<feature type="binding site" evidence="1">
    <location>
        <position position="162"/>
    </location>
    <ligand>
        <name>D-ribulose 5-phosphate</name>
        <dbReference type="ChEBI" id="CHEBI:58121"/>
    </ligand>
</feature>
<feature type="binding site" evidence="1">
    <location>
        <begin position="250"/>
        <end position="254"/>
    </location>
    <ligand>
        <name>GTP</name>
        <dbReference type="ChEBI" id="CHEBI:37565"/>
    </ligand>
</feature>
<feature type="binding site" evidence="1">
    <location>
        <position position="255"/>
    </location>
    <ligand>
        <name>Zn(2+)</name>
        <dbReference type="ChEBI" id="CHEBI:29105"/>
        <note>catalytic</note>
    </ligand>
</feature>
<feature type="binding site" evidence="1">
    <location>
        <position position="266"/>
    </location>
    <ligand>
        <name>Zn(2+)</name>
        <dbReference type="ChEBI" id="CHEBI:29105"/>
        <note>catalytic</note>
    </ligand>
</feature>
<feature type="binding site" evidence="1">
    <location>
        <position position="268"/>
    </location>
    <ligand>
        <name>Zn(2+)</name>
        <dbReference type="ChEBI" id="CHEBI:29105"/>
        <note>catalytic</note>
    </ligand>
</feature>
<feature type="binding site" evidence="1">
    <location>
        <position position="271"/>
    </location>
    <ligand>
        <name>GTP</name>
        <dbReference type="ChEBI" id="CHEBI:37565"/>
    </ligand>
</feature>
<feature type="binding site" evidence="1">
    <location>
        <begin position="293"/>
        <end position="295"/>
    </location>
    <ligand>
        <name>GTP</name>
        <dbReference type="ChEBI" id="CHEBI:37565"/>
    </ligand>
</feature>
<feature type="binding site" evidence="1">
    <location>
        <position position="315"/>
    </location>
    <ligand>
        <name>GTP</name>
        <dbReference type="ChEBI" id="CHEBI:37565"/>
    </ligand>
</feature>
<feature type="binding site" evidence="1">
    <location>
        <position position="350"/>
    </location>
    <ligand>
        <name>GTP</name>
        <dbReference type="ChEBI" id="CHEBI:37565"/>
    </ligand>
</feature>
<feature type="binding site" evidence="1">
    <location>
        <position position="355"/>
    </location>
    <ligand>
        <name>GTP</name>
        <dbReference type="ChEBI" id="CHEBI:37565"/>
    </ligand>
</feature>
<feature type="site" description="Essential for DHBP synthase activity" evidence="1">
    <location>
        <position position="124"/>
    </location>
</feature>
<feature type="site" description="Essential for DHBP synthase activity" evidence="1">
    <location>
        <position position="162"/>
    </location>
</feature>
<dbReference type="EC" id="4.1.99.12" evidence="1"/>
<dbReference type="EC" id="3.5.4.25" evidence="1"/>
<dbReference type="EMBL" id="CP000485">
    <property type="protein sequence ID" value="ABK86956.1"/>
    <property type="molecule type" value="Genomic_DNA"/>
</dbReference>
<dbReference type="RefSeq" id="WP_000469013.1">
    <property type="nucleotide sequence ID" value="NC_008600.1"/>
</dbReference>
<dbReference type="SMR" id="A0RIB3"/>
<dbReference type="GeneID" id="45024000"/>
<dbReference type="KEGG" id="btl:BALH_3727"/>
<dbReference type="HOGENOM" id="CLU_020273_1_2_9"/>
<dbReference type="UniPathway" id="UPA00275">
    <property type="reaction ID" value="UER00399"/>
</dbReference>
<dbReference type="UniPathway" id="UPA00275">
    <property type="reaction ID" value="UER00400"/>
</dbReference>
<dbReference type="GO" id="GO:0005829">
    <property type="term" value="C:cytosol"/>
    <property type="evidence" value="ECO:0007669"/>
    <property type="project" value="TreeGrafter"/>
</dbReference>
<dbReference type="GO" id="GO:0008686">
    <property type="term" value="F:3,4-dihydroxy-2-butanone-4-phosphate synthase activity"/>
    <property type="evidence" value="ECO:0007669"/>
    <property type="project" value="UniProtKB-UniRule"/>
</dbReference>
<dbReference type="GO" id="GO:0005525">
    <property type="term" value="F:GTP binding"/>
    <property type="evidence" value="ECO:0007669"/>
    <property type="project" value="UniProtKB-KW"/>
</dbReference>
<dbReference type="GO" id="GO:0003935">
    <property type="term" value="F:GTP cyclohydrolase II activity"/>
    <property type="evidence" value="ECO:0007669"/>
    <property type="project" value="UniProtKB-UniRule"/>
</dbReference>
<dbReference type="GO" id="GO:0000287">
    <property type="term" value="F:magnesium ion binding"/>
    <property type="evidence" value="ECO:0007669"/>
    <property type="project" value="UniProtKB-UniRule"/>
</dbReference>
<dbReference type="GO" id="GO:0030145">
    <property type="term" value="F:manganese ion binding"/>
    <property type="evidence" value="ECO:0007669"/>
    <property type="project" value="UniProtKB-UniRule"/>
</dbReference>
<dbReference type="GO" id="GO:0008270">
    <property type="term" value="F:zinc ion binding"/>
    <property type="evidence" value="ECO:0007669"/>
    <property type="project" value="UniProtKB-UniRule"/>
</dbReference>
<dbReference type="GO" id="GO:0009231">
    <property type="term" value="P:riboflavin biosynthetic process"/>
    <property type="evidence" value="ECO:0007669"/>
    <property type="project" value="UniProtKB-UniRule"/>
</dbReference>
<dbReference type="CDD" id="cd00641">
    <property type="entry name" value="GTP_cyclohydro2"/>
    <property type="match status" value="1"/>
</dbReference>
<dbReference type="FunFam" id="3.40.50.10990:FF:000001">
    <property type="entry name" value="Riboflavin biosynthesis protein RibBA"/>
    <property type="match status" value="1"/>
</dbReference>
<dbReference type="FunFam" id="3.90.870.10:FF:000001">
    <property type="entry name" value="Riboflavin biosynthesis protein RibBA"/>
    <property type="match status" value="1"/>
</dbReference>
<dbReference type="Gene3D" id="3.90.870.10">
    <property type="entry name" value="DHBP synthase"/>
    <property type="match status" value="1"/>
</dbReference>
<dbReference type="Gene3D" id="3.40.50.10990">
    <property type="entry name" value="GTP cyclohydrolase II"/>
    <property type="match status" value="1"/>
</dbReference>
<dbReference type="HAMAP" id="MF_00179">
    <property type="entry name" value="RibA"/>
    <property type="match status" value="1"/>
</dbReference>
<dbReference type="HAMAP" id="MF_00180">
    <property type="entry name" value="RibB"/>
    <property type="match status" value="1"/>
</dbReference>
<dbReference type="HAMAP" id="MF_01283">
    <property type="entry name" value="RibBA"/>
    <property type="match status" value="1"/>
</dbReference>
<dbReference type="InterPro" id="IPR017945">
    <property type="entry name" value="DHBP_synth_RibB-like_a/b_dom"/>
</dbReference>
<dbReference type="InterPro" id="IPR000422">
    <property type="entry name" value="DHBP_synthase_RibB"/>
</dbReference>
<dbReference type="InterPro" id="IPR032677">
    <property type="entry name" value="GTP_cyclohydro_II"/>
</dbReference>
<dbReference type="InterPro" id="IPR000926">
    <property type="entry name" value="RibA"/>
</dbReference>
<dbReference type="InterPro" id="IPR036144">
    <property type="entry name" value="RibA-like_sf"/>
</dbReference>
<dbReference type="InterPro" id="IPR016299">
    <property type="entry name" value="Riboflavin_synth_RibBA"/>
</dbReference>
<dbReference type="NCBIfam" id="NF001591">
    <property type="entry name" value="PRK00393.1"/>
    <property type="match status" value="1"/>
</dbReference>
<dbReference type="NCBIfam" id="NF006803">
    <property type="entry name" value="PRK09311.1"/>
    <property type="match status" value="1"/>
</dbReference>
<dbReference type="NCBIfam" id="TIGR00505">
    <property type="entry name" value="ribA"/>
    <property type="match status" value="1"/>
</dbReference>
<dbReference type="NCBIfam" id="TIGR00506">
    <property type="entry name" value="ribB"/>
    <property type="match status" value="1"/>
</dbReference>
<dbReference type="PANTHER" id="PTHR21327:SF18">
    <property type="entry name" value="3,4-DIHYDROXY-2-BUTANONE 4-PHOSPHATE SYNTHASE"/>
    <property type="match status" value="1"/>
</dbReference>
<dbReference type="PANTHER" id="PTHR21327">
    <property type="entry name" value="GTP CYCLOHYDROLASE II-RELATED"/>
    <property type="match status" value="1"/>
</dbReference>
<dbReference type="Pfam" id="PF00926">
    <property type="entry name" value="DHBP_synthase"/>
    <property type="match status" value="1"/>
</dbReference>
<dbReference type="Pfam" id="PF00925">
    <property type="entry name" value="GTP_cyclohydro2"/>
    <property type="match status" value="1"/>
</dbReference>
<dbReference type="PIRSF" id="PIRSF001259">
    <property type="entry name" value="RibA"/>
    <property type="match status" value="1"/>
</dbReference>
<dbReference type="SUPFAM" id="SSF142695">
    <property type="entry name" value="RibA-like"/>
    <property type="match status" value="1"/>
</dbReference>
<dbReference type="SUPFAM" id="SSF55821">
    <property type="entry name" value="YrdC/RibB"/>
    <property type="match status" value="1"/>
</dbReference>
<evidence type="ECO:0000255" key="1">
    <source>
        <dbReference type="HAMAP-Rule" id="MF_01283"/>
    </source>
</evidence>
<sequence length="397" mass="43907">MFHRIEEALEDLKQGKVVIVCDDENRENEGDFIALAEYITPETINFMITHGRGLVCVPITEGYAERLQLEPMVSHNTDSHHTAFTVSIDHVSTTTGISAHERATTIQQLLNPASKGADFNRPGHIFPLIAKEGGVLRRAGHTEAAVDLAQLCGAEPAGVICEIINEDGTMARVPDLLQCAKQFDIKMITIEDLIAYRRHHETLVTREVEITLPTDFGTFQAIGYSNSLDTKEHIALVKGDISTGEPVLVRVHSECLTGDVFGSCRCDCGPQLHAALAQIEREGKGVLLYMRQEGRGIGLLNKLRAYKLQEEGFDTVEANEKLGFPADLRDYGIGAQILKDLGLQHLRLLTNNPRKIAGLQGYDLTVTERVPLQMPAKEENKTYLQTKVNKLGHLLNL</sequence>
<name>RIBBA_BACAH</name>
<proteinExistence type="inferred from homology"/>
<reference key="1">
    <citation type="journal article" date="2007" name="J. Bacteriol.">
        <title>The complete genome sequence of Bacillus thuringiensis Al Hakam.</title>
        <authorList>
            <person name="Challacombe J.F."/>
            <person name="Altherr M.R."/>
            <person name="Xie G."/>
            <person name="Bhotika S.S."/>
            <person name="Brown N."/>
            <person name="Bruce D."/>
            <person name="Campbell C.S."/>
            <person name="Campbell M.L."/>
            <person name="Chen J."/>
            <person name="Chertkov O."/>
            <person name="Cleland C."/>
            <person name="Dimitrijevic M."/>
            <person name="Doggett N.A."/>
            <person name="Fawcett J.J."/>
            <person name="Glavina T."/>
            <person name="Goodwin L.A."/>
            <person name="Green L.D."/>
            <person name="Han C.S."/>
            <person name="Hill K.K."/>
            <person name="Hitchcock P."/>
            <person name="Jackson P.J."/>
            <person name="Keim P."/>
            <person name="Kewalramani A.R."/>
            <person name="Longmire J."/>
            <person name="Lucas S."/>
            <person name="Malfatti S."/>
            <person name="Martinez D."/>
            <person name="McMurry K."/>
            <person name="Meincke L.J."/>
            <person name="Misra M."/>
            <person name="Moseman B.L."/>
            <person name="Mundt M."/>
            <person name="Munk A.C."/>
            <person name="Okinaka R.T."/>
            <person name="Parson-Quintana B."/>
            <person name="Reilly L.P."/>
            <person name="Richardson P."/>
            <person name="Robinson D.L."/>
            <person name="Saunders E."/>
            <person name="Tapia R."/>
            <person name="Tesmer J.G."/>
            <person name="Thayer N."/>
            <person name="Thompson L.S."/>
            <person name="Tice H."/>
            <person name="Ticknor L.O."/>
            <person name="Wills P.L."/>
            <person name="Gilna P."/>
            <person name="Brettin T.S."/>
        </authorList>
    </citation>
    <scope>NUCLEOTIDE SEQUENCE [LARGE SCALE GENOMIC DNA]</scope>
    <source>
        <strain>Al Hakam</strain>
    </source>
</reference>
<accession>A0RIB3</accession>
<gene>
    <name evidence="1" type="primary">ribBA</name>
    <name type="ordered locus">BALH_3727</name>
</gene>
<organism>
    <name type="scientific">Bacillus thuringiensis (strain Al Hakam)</name>
    <dbReference type="NCBI Taxonomy" id="412694"/>
    <lineage>
        <taxon>Bacteria</taxon>
        <taxon>Bacillati</taxon>
        <taxon>Bacillota</taxon>
        <taxon>Bacilli</taxon>
        <taxon>Bacillales</taxon>
        <taxon>Bacillaceae</taxon>
        <taxon>Bacillus</taxon>
        <taxon>Bacillus cereus group</taxon>
    </lineage>
</organism>
<keyword id="KW-0342">GTP-binding</keyword>
<keyword id="KW-0378">Hydrolase</keyword>
<keyword id="KW-0456">Lyase</keyword>
<keyword id="KW-0460">Magnesium</keyword>
<keyword id="KW-0464">Manganese</keyword>
<keyword id="KW-0479">Metal-binding</keyword>
<keyword id="KW-0511">Multifunctional enzyme</keyword>
<keyword id="KW-0547">Nucleotide-binding</keyword>
<keyword id="KW-0686">Riboflavin biosynthesis</keyword>
<keyword id="KW-0862">Zinc</keyword>
<protein>
    <recommendedName>
        <fullName evidence="1">Riboflavin biosynthesis protein RibBA</fullName>
    </recommendedName>
    <domain>
        <recommendedName>
            <fullName evidence="1">3,4-dihydroxy-2-butanone 4-phosphate synthase</fullName>
            <shortName evidence="1">DHBP synthase</shortName>
            <ecNumber evidence="1">4.1.99.12</ecNumber>
        </recommendedName>
    </domain>
    <domain>
        <recommendedName>
            <fullName evidence="1">GTP cyclohydrolase-2</fullName>
            <ecNumber evidence="1">3.5.4.25</ecNumber>
        </recommendedName>
        <alternativeName>
            <fullName evidence="1">GTP cyclohydrolase II</fullName>
        </alternativeName>
    </domain>
</protein>